<comment type="function">
    <text evidence="1">Major role in the synthesis of nucleoside triphosphates other than ATP. The ATP gamma phosphate is transferred to the NDP beta phosphate via a ping-pong mechanism, using a phosphorylated active-site intermediate.</text>
</comment>
<comment type="catalytic activity">
    <reaction evidence="1">
        <text>a 2'-deoxyribonucleoside 5'-diphosphate + ATP = a 2'-deoxyribonucleoside 5'-triphosphate + ADP</text>
        <dbReference type="Rhea" id="RHEA:44640"/>
        <dbReference type="ChEBI" id="CHEBI:30616"/>
        <dbReference type="ChEBI" id="CHEBI:61560"/>
        <dbReference type="ChEBI" id="CHEBI:73316"/>
        <dbReference type="ChEBI" id="CHEBI:456216"/>
        <dbReference type="EC" id="2.7.4.6"/>
    </reaction>
</comment>
<comment type="catalytic activity">
    <reaction evidence="1">
        <text>a ribonucleoside 5'-diphosphate + ATP = a ribonucleoside 5'-triphosphate + ADP</text>
        <dbReference type="Rhea" id="RHEA:18113"/>
        <dbReference type="ChEBI" id="CHEBI:30616"/>
        <dbReference type="ChEBI" id="CHEBI:57930"/>
        <dbReference type="ChEBI" id="CHEBI:61557"/>
        <dbReference type="ChEBI" id="CHEBI:456216"/>
        <dbReference type="EC" id="2.7.4.6"/>
    </reaction>
</comment>
<comment type="cofactor">
    <cofactor evidence="1">
        <name>Mg(2+)</name>
        <dbReference type="ChEBI" id="CHEBI:18420"/>
    </cofactor>
</comment>
<comment type="subunit">
    <text evidence="1">Homotetramer.</text>
</comment>
<comment type="subcellular location">
    <subcellularLocation>
        <location evidence="1">Cytoplasm</location>
    </subcellularLocation>
</comment>
<comment type="similarity">
    <text evidence="1">Belongs to the NDK family.</text>
</comment>
<accession>Q3JRQ0</accession>
<gene>
    <name evidence="1" type="primary">ndk</name>
    <name type="ordered locus">BURPS1710b_2358</name>
</gene>
<proteinExistence type="inferred from homology"/>
<keyword id="KW-0067">ATP-binding</keyword>
<keyword id="KW-0963">Cytoplasm</keyword>
<keyword id="KW-0418">Kinase</keyword>
<keyword id="KW-0460">Magnesium</keyword>
<keyword id="KW-0479">Metal-binding</keyword>
<keyword id="KW-0546">Nucleotide metabolism</keyword>
<keyword id="KW-0547">Nucleotide-binding</keyword>
<keyword id="KW-0597">Phosphoprotein</keyword>
<keyword id="KW-0808">Transferase</keyword>
<dbReference type="EC" id="2.7.4.6" evidence="1"/>
<dbReference type="EMBL" id="CP000124">
    <property type="protein sequence ID" value="ABA50874.1"/>
    <property type="molecule type" value="Genomic_DNA"/>
</dbReference>
<dbReference type="RefSeq" id="WP_004193561.1">
    <property type="nucleotide sequence ID" value="NC_007434.1"/>
</dbReference>
<dbReference type="SMR" id="Q3JRQ0"/>
<dbReference type="EnsemblBacteria" id="ABA50874">
    <property type="protein sequence ID" value="ABA50874"/>
    <property type="gene ID" value="BURPS1710b_2358"/>
</dbReference>
<dbReference type="GeneID" id="92979081"/>
<dbReference type="KEGG" id="bpm:BURPS1710b_2358"/>
<dbReference type="HOGENOM" id="CLU_060216_8_1_4"/>
<dbReference type="Proteomes" id="UP000002700">
    <property type="component" value="Chromosome I"/>
</dbReference>
<dbReference type="GO" id="GO:0005737">
    <property type="term" value="C:cytoplasm"/>
    <property type="evidence" value="ECO:0007669"/>
    <property type="project" value="UniProtKB-SubCell"/>
</dbReference>
<dbReference type="GO" id="GO:0005524">
    <property type="term" value="F:ATP binding"/>
    <property type="evidence" value="ECO:0007669"/>
    <property type="project" value="UniProtKB-UniRule"/>
</dbReference>
<dbReference type="GO" id="GO:0046872">
    <property type="term" value="F:metal ion binding"/>
    <property type="evidence" value="ECO:0007669"/>
    <property type="project" value="UniProtKB-KW"/>
</dbReference>
<dbReference type="GO" id="GO:0004550">
    <property type="term" value="F:nucleoside diphosphate kinase activity"/>
    <property type="evidence" value="ECO:0007669"/>
    <property type="project" value="UniProtKB-UniRule"/>
</dbReference>
<dbReference type="GO" id="GO:0006241">
    <property type="term" value="P:CTP biosynthetic process"/>
    <property type="evidence" value="ECO:0007669"/>
    <property type="project" value="UniProtKB-UniRule"/>
</dbReference>
<dbReference type="GO" id="GO:0006183">
    <property type="term" value="P:GTP biosynthetic process"/>
    <property type="evidence" value="ECO:0007669"/>
    <property type="project" value="UniProtKB-UniRule"/>
</dbReference>
<dbReference type="GO" id="GO:0006228">
    <property type="term" value="P:UTP biosynthetic process"/>
    <property type="evidence" value="ECO:0007669"/>
    <property type="project" value="UniProtKB-UniRule"/>
</dbReference>
<dbReference type="CDD" id="cd04413">
    <property type="entry name" value="NDPk_I"/>
    <property type="match status" value="1"/>
</dbReference>
<dbReference type="FunFam" id="3.30.70.141:FF:000001">
    <property type="entry name" value="Nucleoside diphosphate kinase"/>
    <property type="match status" value="1"/>
</dbReference>
<dbReference type="Gene3D" id="3.30.70.141">
    <property type="entry name" value="Nucleoside diphosphate kinase-like domain"/>
    <property type="match status" value="1"/>
</dbReference>
<dbReference type="HAMAP" id="MF_00451">
    <property type="entry name" value="NDP_kinase"/>
    <property type="match status" value="1"/>
</dbReference>
<dbReference type="InterPro" id="IPR034907">
    <property type="entry name" value="NDK-like_dom"/>
</dbReference>
<dbReference type="InterPro" id="IPR036850">
    <property type="entry name" value="NDK-like_dom_sf"/>
</dbReference>
<dbReference type="InterPro" id="IPR001564">
    <property type="entry name" value="Nucleoside_diP_kinase"/>
</dbReference>
<dbReference type="InterPro" id="IPR023005">
    <property type="entry name" value="Nucleoside_diP_kinase_AS"/>
</dbReference>
<dbReference type="NCBIfam" id="NF001908">
    <property type="entry name" value="PRK00668.1"/>
    <property type="match status" value="1"/>
</dbReference>
<dbReference type="PANTHER" id="PTHR46161">
    <property type="entry name" value="NUCLEOSIDE DIPHOSPHATE KINASE"/>
    <property type="match status" value="1"/>
</dbReference>
<dbReference type="PANTHER" id="PTHR46161:SF3">
    <property type="entry name" value="NUCLEOSIDE DIPHOSPHATE KINASE DDB_G0292928-RELATED"/>
    <property type="match status" value="1"/>
</dbReference>
<dbReference type="Pfam" id="PF00334">
    <property type="entry name" value="NDK"/>
    <property type="match status" value="1"/>
</dbReference>
<dbReference type="PRINTS" id="PR01243">
    <property type="entry name" value="NUCDPKINASE"/>
</dbReference>
<dbReference type="SMART" id="SM00562">
    <property type="entry name" value="NDK"/>
    <property type="match status" value="1"/>
</dbReference>
<dbReference type="SUPFAM" id="SSF54919">
    <property type="entry name" value="Nucleoside diphosphate kinase, NDK"/>
    <property type="match status" value="1"/>
</dbReference>
<dbReference type="PROSITE" id="PS00469">
    <property type="entry name" value="NDPK"/>
    <property type="match status" value="1"/>
</dbReference>
<dbReference type="PROSITE" id="PS51374">
    <property type="entry name" value="NDPK_LIKE"/>
    <property type="match status" value="1"/>
</dbReference>
<reference key="1">
    <citation type="journal article" date="2010" name="Genome Biol. Evol.">
        <title>Continuing evolution of Burkholderia mallei through genome reduction and large-scale rearrangements.</title>
        <authorList>
            <person name="Losada L."/>
            <person name="Ronning C.M."/>
            <person name="DeShazer D."/>
            <person name="Woods D."/>
            <person name="Fedorova N."/>
            <person name="Kim H.S."/>
            <person name="Shabalina S.A."/>
            <person name="Pearson T.R."/>
            <person name="Brinkac L."/>
            <person name="Tan P."/>
            <person name="Nandi T."/>
            <person name="Crabtree J."/>
            <person name="Badger J."/>
            <person name="Beckstrom-Sternberg S."/>
            <person name="Saqib M."/>
            <person name="Schutzer S.E."/>
            <person name="Keim P."/>
            <person name="Nierman W.C."/>
        </authorList>
    </citation>
    <scope>NUCLEOTIDE SEQUENCE [LARGE SCALE GENOMIC DNA]</scope>
    <source>
        <strain>1710b</strain>
    </source>
</reference>
<evidence type="ECO:0000255" key="1">
    <source>
        <dbReference type="HAMAP-Rule" id="MF_00451"/>
    </source>
</evidence>
<sequence>MALERTLSIIKPDAVAKNVIGQIYSRFENAGLKIVAARMAHLSRADAEKFYAVHAERPFFKDLVDFMISGPVMIQVLEGEDAILKNRDLMGATDPKKAEKGTIRADFADSIDANAVHGSDAPETARAEVAFFFPEMNVYSR</sequence>
<protein>
    <recommendedName>
        <fullName evidence="1">Nucleoside diphosphate kinase</fullName>
        <shortName evidence="1">NDK</shortName>
        <shortName evidence="1">NDP kinase</shortName>
        <ecNumber evidence="1">2.7.4.6</ecNumber>
    </recommendedName>
    <alternativeName>
        <fullName evidence="1">Nucleoside-2-P kinase</fullName>
    </alternativeName>
</protein>
<name>NDK_BURP1</name>
<organism>
    <name type="scientific">Burkholderia pseudomallei (strain 1710b)</name>
    <dbReference type="NCBI Taxonomy" id="320372"/>
    <lineage>
        <taxon>Bacteria</taxon>
        <taxon>Pseudomonadati</taxon>
        <taxon>Pseudomonadota</taxon>
        <taxon>Betaproteobacteria</taxon>
        <taxon>Burkholderiales</taxon>
        <taxon>Burkholderiaceae</taxon>
        <taxon>Burkholderia</taxon>
        <taxon>pseudomallei group</taxon>
    </lineage>
</organism>
<feature type="chain" id="PRO_0000226550" description="Nucleoside diphosphate kinase">
    <location>
        <begin position="1"/>
        <end position="141"/>
    </location>
</feature>
<feature type="active site" description="Pros-phosphohistidine intermediate" evidence="1">
    <location>
        <position position="117"/>
    </location>
</feature>
<feature type="binding site" evidence="1">
    <location>
        <position position="11"/>
    </location>
    <ligand>
        <name>ATP</name>
        <dbReference type="ChEBI" id="CHEBI:30616"/>
    </ligand>
</feature>
<feature type="binding site" evidence="1">
    <location>
        <position position="59"/>
    </location>
    <ligand>
        <name>ATP</name>
        <dbReference type="ChEBI" id="CHEBI:30616"/>
    </ligand>
</feature>
<feature type="binding site" evidence="1">
    <location>
        <position position="87"/>
    </location>
    <ligand>
        <name>ATP</name>
        <dbReference type="ChEBI" id="CHEBI:30616"/>
    </ligand>
</feature>
<feature type="binding site" evidence="1">
    <location>
        <position position="93"/>
    </location>
    <ligand>
        <name>ATP</name>
        <dbReference type="ChEBI" id="CHEBI:30616"/>
    </ligand>
</feature>
<feature type="binding site" evidence="1">
    <location>
        <position position="104"/>
    </location>
    <ligand>
        <name>ATP</name>
        <dbReference type="ChEBI" id="CHEBI:30616"/>
    </ligand>
</feature>
<feature type="binding site" evidence="1">
    <location>
        <position position="114"/>
    </location>
    <ligand>
        <name>ATP</name>
        <dbReference type="ChEBI" id="CHEBI:30616"/>
    </ligand>
</feature>